<dbReference type="EMBL" id="AE017321">
    <property type="protein sequence ID" value="AAW70927.1"/>
    <property type="molecule type" value="Genomic_DNA"/>
</dbReference>
<dbReference type="RefSeq" id="WP_011256537.1">
    <property type="nucleotide sequence ID" value="NC_006833.1"/>
</dbReference>
<dbReference type="SMR" id="Q5GSU7"/>
<dbReference type="STRING" id="292805.Wbm0338"/>
<dbReference type="KEGG" id="wbm:Wbm0338"/>
<dbReference type="eggNOG" id="COG0090">
    <property type="taxonomic scope" value="Bacteria"/>
</dbReference>
<dbReference type="HOGENOM" id="CLU_036235_2_1_5"/>
<dbReference type="Proteomes" id="UP000000534">
    <property type="component" value="Chromosome"/>
</dbReference>
<dbReference type="GO" id="GO:0015934">
    <property type="term" value="C:large ribosomal subunit"/>
    <property type="evidence" value="ECO:0007669"/>
    <property type="project" value="InterPro"/>
</dbReference>
<dbReference type="GO" id="GO:0019843">
    <property type="term" value="F:rRNA binding"/>
    <property type="evidence" value="ECO:0007669"/>
    <property type="project" value="UniProtKB-UniRule"/>
</dbReference>
<dbReference type="GO" id="GO:0003735">
    <property type="term" value="F:structural constituent of ribosome"/>
    <property type="evidence" value="ECO:0007669"/>
    <property type="project" value="InterPro"/>
</dbReference>
<dbReference type="GO" id="GO:0016740">
    <property type="term" value="F:transferase activity"/>
    <property type="evidence" value="ECO:0007669"/>
    <property type="project" value="InterPro"/>
</dbReference>
<dbReference type="GO" id="GO:0002181">
    <property type="term" value="P:cytoplasmic translation"/>
    <property type="evidence" value="ECO:0007669"/>
    <property type="project" value="TreeGrafter"/>
</dbReference>
<dbReference type="FunFam" id="2.30.30.30:FF:000001">
    <property type="entry name" value="50S ribosomal protein L2"/>
    <property type="match status" value="1"/>
</dbReference>
<dbReference type="FunFam" id="4.10.950.10:FF:000001">
    <property type="entry name" value="50S ribosomal protein L2"/>
    <property type="match status" value="1"/>
</dbReference>
<dbReference type="Gene3D" id="2.30.30.30">
    <property type="match status" value="1"/>
</dbReference>
<dbReference type="Gene3D" id="2.40.50.140">
    <property type="entry name" value="Nucleic acid-binding proteins"/>
    <property type="match status" value="1"/>
</dbReference>
<dbReference type="Gene3D" id="4.10.950.10">
    <property type="entry name" value="Ribosomal protein L2, domain 3"/>
    <property type="match status" value="1"/>
</dbReference>
<dbReference type="HAMAP" id="MF_01320_B">
    <property type="entry name" value="Ribosomal_uL2_B"/>
    <property type="match status" value="1"/>
</dbReference>
<dbReference type="InterPro" id="IPR012340">
    <property type="entry name" value="NA-bd_OB-fold"/>
</dbReference>
<dbReference type="InterPro" id="IPR014722">
    <property type="entry name" value="Rib_uL2_dom2"/>
</dbReference>
<dbReference type="InterPro" id="IPR002171">
    <property type="entry name" value="Ribosomal_uL2"/>
</dbReference>
<dbReference type="InterPro" id="IPR005880">
    <property type="entry name" value="Ribosomal_uL2_bac/org-type"/>
</dbReference>
<dbReference type="InterPro" id="IPR022669">
    <property type="entry name" value="Ribosomal_uL2_C"/>
</dbReference>
<dbReference type="InterPro" id="IPR022671">
    <property type="entry name" value="Ribosomal_uL2_CS"/>
</dbReference>
<dbReference type="InterPro" id="IPR014726">
    <property type="entry name" value="Ribosomal_uL2_dom3"/>
</dbReference>
<dbReference type="InterPro" id="IPR022666">
    <property type="entry name" value="Ribosomal_uL2_RNA-bd_dom"/>
</dbReference>
<dbReference type="InterPro" id="IPR008991">
    <property type="entry name" value="Translation_prot_SH3-like_sf"/>
</dbReference>
<dbReference type="NCBIfam" id="TIGR01171">
    <property type="entry name" value="rplB_bact"/>
    <property type="match status" value="1"/>
</dbReference>
<dbReference type="PANTHER" id="PTHR13691:SF5">
    <property type="entry name" value="LARGE RIBOSOMAL SUBUNIT PROTEIN UL2M"/>
    <property type="match status" value="1"/>
</dbReference>
<dbReference type="PANTHER" id="PTHR13691">
    <property type="entry name" value="RIBOSOMAL PROTEIN L2"/>
    <property type="match status" value="1"/>
</dbReference>
<dbReference type="Pfam" id="PF00181">
    <property type="entry name" value="Ribosomal_L2"/>
    <property type="match status" value="1"/>
</dbReference>
<dbReference type="Pfam" id="PF03947">
    <property type="entry name" value="Ribosomal_L2_C"/>
    <property type="match status" value="1"/>
</dbReference>
<dbReference type="PIRSF" id="PIRSF002158">
    <property type="entry name" value="Ribosomal_L2"/>
    <property type="match status" value="1"/>
</dbReference>
<dbReference type="SMART" id="SM01383">
    <property type="entry name" value="Ribosomal_L2"/>
    <property type="match status" value="1"/>
</dbReference>
<dbReference type="SMART" id="SM01382">
    <property type="entry name" value="Ribosomal_L2_C"/>
    <property type="match status" value="1"/>
</dbReference>
<dbReference type="SUPFAM" id="SSF50249">
    <property type="entry name" value="Nucleic acid-binding proteins"/>
    <property type="match status" value="1"/>
</dbReference>
<dbReference type="SUPFAM" id="SSF50104">
    <property type="entry name" value="Translation proteins SH3-like domain"/>
    <property type="match status" value="1"/>
</dbReference>
<dbReference type="PROSITE" id="PS00467">
    <property type="entry name" value="RIBOSOMAL_L2"/>
    <property type="match status" value="1"/>
</dbReference>
<comment type="function">
    <text evidence="1">One of the primary rRNA binding proteins. Required for association of the 30S and 50S subunits to form the 70S ribosome, for tRNA binding and peptide bond formation. It has been suggested to have peptidyltransferase activity; this is somewhat controversial. Makes several contacts with the 16S rRNA in the 70S ribosome.</text>
</comment>
<comment type="subunit">
    <text evidence="1">Part of the 50S ribosomal subunit. Forms a bridge to the 30S subunit in the 70S ribosome.</text>
</comment>
<comment type="similarity">
    <text evidence="1">Belongs to the universal ribosomal protein uL2 family.</text>
</comment>
<protein>
    <recommendedName>
        <fullName evidence="1">Large ribosomal subunit protein uL2</fullName>
    </recommendedName>
    <alternativeName>
        <fullName evidence="3">50S ribosomal protein L2</fullName>
    </alternativeName>
</protein>
<organism>
    <name type="scientific">Wolbachia sp. subsp. Brugia malayi (strain TRS)</name>
    <dbReference type="NCBI Taxonomy" id="292805"/>
    <lineage>
        <taxon>Bacteria</taxon>
        <taxon>Pseudomonadati</taxon>
        <taxon>Pseudomonadota</taxon>
        <taxon>Alphaproteobacteria</taxon>
        <taxon>Rickettsiales</taxon>
        <taxon>Anaplasmataceae</taxon>
        <taxon>Wolbachieae</taxon>
        <taxon>Wolbachia</taxon>
    </lineage>
</organism>
<keyword id="KW-1185">Reference proteome</keyword>
<keyword id="KW-0687">Ribonucleoprotein</keyword>
<keyword id="KW-0689">Ribosomal protein</keyword>
<keyword id="KW-0694">RNA-binding</keyword>
<keyword id="KW-0699">rRNA-binding</keyword>
<proteinExistence type="inferred from homology"/>
<gene>
    <name evidence="1" type="primary">rplB</name>
    <name type="ordered locus">Wbm0338</name>
</gene>
<evidence type="ECO:0000255" key="1">
    <source>
        <dbReference type="HAMAP-Rule" id="MF_01320"/>
    </source>
</evidence>
<evidence type="ECO:0000256" key="2">
    <source>
        <dbReference type="SAM" id="MobiDB-lite"/>
    </source>
</evidence>
<evidence type="ECO:0000305" key="3"/>
<sequence length="274" mass="29429">MGIKFLNPVTPSSRGTVLVSKIGLSRGKPEKSLAFGKKSSGGRNNNGRITIRHKGGGHKKKYRIIDFKRNRNDQGVVEKIEYDPNRSGFLALVSYKCDDTKSYILAPQGIKPGDIVMSGSGIDILPGNCLPLKGIPIGSFVHGVELKPGSGAVIARAAGCYAQVVGRDGNYVLLRLRSGQVRLVLSSCKATIGVVSNPDRKNRKLGKAGRSRWLGVRPTVRGVAMNPVDHPHGGGEGKTSGGRHPVTPWGVATKGKKTRKKNKFSDKYIKQLKG</sequence>
<name>RL2_WOLTR</name>
<accession>Q5GSU7</accession>
<reference key="1">
    <citation type="journal article" date="2005" name="PLoS Biol.">
        <title>The Wolbachia genome of Brugia malayi: endosymbiont evolution within a human pathogenic nematode.</title>
        <authorList>
            <person name="Foster J."/>
            <person name="Ganatra M."/>
            <person name="Kamal I."/>
            <person name="Ware J."/>
            <person name="Makarova K."/>
            <person name="Ivanova N."/>
            <person name="Bhattacharyya A."/>
            <person name="Kapatral V."/>
            <person name="Kumar S."/>
            <person name="Posfai J."/>
            <person name="Vincze T."/>
            <person name="Ingram J."/>
            <person name="Moran L."/>
            <person name="Lapidus A."/>
            <person name="Omelchenko M."/>
            <person name="Kyrpides N."/>
            <person name="Ghedin E."/>
            <person name="Wang S."/>
            <person name="Goltsman E."/>
            <person name="Joukov V."/>
            <person name="Ostrovskaya O."/>
            <person name="Tsukerman K."/>
            <person name="Mazur M."/>
            <person name="Comb D."/>
            <person name="Koonin E."/>
            <person name="Slatko B."/>
        </authorList>
    </citation>
    <scope>NUCLEOTIDE SEQUENCE [LARGE SCALE GENOMIC DNA]</scope>
    <source>
        <strain>TRS</strain>
    </source>
</reference>
<feature type="chain" id="PRO_0000237266" description="Large ribosomal subunit protein uL2">
    <location>
        <begin position="1"/>
        <end position="274"/>
    </location>
</feature>
<feature type="region of interest" description="Disordered" evidence="2">
    <location>
        <begin position="30"/>
        <end position="54"/>
    </location>
</feature>
<feature type="region of interest" description="Disordered" evidence="2">
    <location>
        <begin position="223"/>
        <end position="274"/>
    </location>
</feature>
<feature type="compositionally biased region" description="Low complexity" evidence="2">
    <location>
        <begin position="36"/>
        <end position="48"/>
    </location>
</feature>
<feature type="compositionally biased region" description="Basic and acidic residues" evidence="2">
    <location>
        <begin position="263"/>
        <end position="274"/>
    </location>
</feature>